<dbReference type="EC" id="6.1.1.4" evidence="1"/>
<dbReference type="EMBL" id="BA000030">
    <property type="protein sequence ID" value="BAC73200.1"/>
    <property type="molecule type" value="Genomic_DNA"/>
</dbReference>
<dbReference type="RefSeq" id="WP_010986890.1">
    <property type="nucleotide sequence ID" value="NZ_JZJK01000066.1"/>
</dbReference>
<dbReference type="SMR" id="Q82C66"/>
<dbReference type="GeneID" id="41542581"/>
<dbReference type="KEGG" id="sma:SAVERM_5488"/>
<dbReference type="eggNOG" id="COG0495">
    <property type="taxonomic scope" value="Bacteria"/>
</dbReference>
<dbReference type="HOGENOM" id="CLU_004427_0_0_11"/>
<dbReference type="OrthoDB" id="9810365at2"/>
<dbReference type="Proteomes" id="UP000000428">
    <property type="component" value="Chromosome"/>
</dbReference>
<dbReference type="GO" id="GO:0005829">
    <property type="term" value="C:cytosol"/>
    <property type="evidence" value="ECO:0007669"/>
    <property type="project" value="TreeGrafter"/>
</dbReference>
<dbReference type="GO" id="GO:0002161">
    <property type="term" value="F:aminoacyl-tRNA deacylase activity"/>
    <property type="evidence" value="ECO:0007669"/>
    <property type="project" value="InterPro"/>
</dbReference>
<dbReference type="GO" id="GO:0005524">
    <property type="term" value="F:ATP binding"/>
    <property type="evidence" value="ECO:0007669"/>
    <property type="project" value="UniProtKB-UniRule"/>
</dbReference>
<dbReference type="GO" id="GO:0004823">
    <property type="term" value="F:leucine-tRNA ligase activity"/>
    <property type="evidence" value="ECO:0007669"/>
    <property type="project" value="UniProtKB-UniRule"/>
</dbReference>
<dbReference type="GO" id="GO:0006429">
    <property type="term" value="P:leucyl-tRNA aminoacylation"/>
    <property type="evidence" value="ECO:0007669"/>
    <property type="project" value="UniProtKB-UniRule"/>
</dbReference>
<dbReference type="CDD" id="cd07958">
    <property type="entry name" value="Anticodon_Ia_Leu_BEm"/>
    <property type="match status" value="1"/>
</dbReference>
<dbReference type="FunFam" id="3.40.50.620:FF:000056">
    <property type="entry name" value="Leucine--tRNA ligase"/>
    <property type="match status" value="1"/>
</dbReference>
<dbReference type="FunFam" id="3.40.50.620:FF:000060">
    <property type="entry name" value="Leucine--tRNA ligase"/>
    <property type="match status" value="1"/>
</dbReference>
<dbReference type="FunFam" id="3.40.50.620:FF:000087">
    <property type="entry name" value="Leucine--tRNA ligase"/>
    <property type="match status" value="1"/>
</dbReference>
<dbReference type="FunFam" id="3.90.740.10:FF:000017">
    <property type="entry name" value="Leucine--tRNA ligase"/>
    <property type="match status" value="1"/>
</dbReference>
<dbReference type="FunFam" id="1.10.730.10:FF:000011">
    <property type="entry name" value="Leucine--tRNA ligase chloroplastic/mitochondrial"/>
    <property type="match status" value="1"/>
</dbReference>
<dbReference type="Gene3D" id="3.40.50.620">
    <property type="entry name" value="HUPs"/>
    <property type="match status" value="2"/>
</dbReference>
<dbReference type="Gene3D" id="1.10.730.10">
    <property type="entry name" value="Isoleucyl-tRNA Synthetase, Domain 1"/>
    <property type="match status" value="2"/>
</dbReference>
<dbReference type="Gene3D" id="3.90.740.10">
    <property type="entry name" value="Valyl/Leucyl/Isoleucyl-tRNA synthetase, editing domain"/>
    <property type="match status" value="1"/>
</dbReference>
<dbReference type="HAMAP" id="MF_00049_B">
    <property type="entry name" value="Leu_tRNA_synth_B"/>
    <property type="match status" value="1"/>
</dbReference>
<dbReference type="InterPro" id="IPR001412">
    <property type="entry name" value="aa-tRNA-synth_I_CS"/>
</dbReference>
<dbReference type="InterPro" id="IPR002302">
    <property type="entry name" value="Leu-tRNA-ligase"/>
</dbReference>
<dbReference type="InterPro" id="IPR025709">
    <property type="entry name" value="Leu_tRNA-synth_edit"/>
</dbReference>
<dbReference type="InterPro" id="IPR013155">
    <property type="entry name" value="M/V/L/I-tRNA-synth_anticd-bd"/>
</dbReference>
<dbReference type="InterPro" id="IPR015413">
    <property type="entry name" value="Methionyl/Leucyl_tRNA_Synth"/>
</dbReference>
<dbReference type="InterPro" id="IPR014729">
    <property type="entry name" value="Rossmann-like_a/b/a_fold"/>
</dbReference>
<dbReference type="InterPro" id="IPR009080">
    <property type="entry name" value="tRNAsynth_Ia_anticodon-bd"/>
</dbReference>
<dbReference type="InterPro" id="IPR009008">
    <property type="entry name" value="Val/Leu/Ile-tRNA-synth_edit"/>
</dbReference>
<dbReference type="NCBIfam" id="TIGR00396">
    <property type="entry name" value="leuS_bact"/>
    <property type="match status" value="1"/>
</dbReference>
<dbReference type="PANTHER" id="PTHR43740:SF2">
    <property type="entry name" value="LEUCINE--TRNA LIGASE, MITOCHONDRIAL"/>
    <property type="match status" value="1"/>
</dbReference>
<dbReference type="PANTHER" id="PTHR43740">
    <property type="entry name" value="LEUCYL-TRNA SYNTHETASE"/>
    <property type="match status" value="1"/>
</dbReference>
<dbReference type="Pfam" id="PF08264">
    <property type="entry name" value="Anticodon_1"/>
    <property type="match status" value="1"/>
</dbReference>
<dbReference type="Pfam" id="PF13603">
    <property type="entry name" value="tRNA-synt_1_2"/>
    <property type="match status" value="1"/>
</dbReference>
<dbReference type="Pfam" id="PF09334">
    <property type="entry name" value="tRNA-synt_1g"/>
    <property type="match status" value="1"/>
</dbReference>
<dbReference type="PRINTS" id="PR00985">
    <property type="entry name" value="TRNASYNTHLEU"/>
</dbReference>
<dbReference type="SUPFAM" id="SSF47323">
    <property type="entry name" value="Anticodon-binding domain of a subclass of class I aminoacyl-tRNA synthetases"/>
    <property type="match status" value="1"/>
</dbReference>
<dbReference type="SUPFAM" id="SSF52374">
    <property type="entry name" value="Nucleotidylyl transferase"/>
    <property type="match status" value="1"/>
</dbReference>
<dbReference type="SUPFAM" id="SSF50677">
    <property type="entry name" value="ValRS/IleRS/LeuRS editing domain"/>
    <property type="match status" value="1"/>
</dbReference>
<dbReference type="PROSITE" id="PS00178">
    <property type="entry name" value="AA_TRNA_LIGASE_I"/>
    <property type="match status" value="1"/>
</dbReference>
<reference key="1">
    <citation type="journal article" date="2001" name="Proc. Natl. Acad. Sci. U.S.A.">
        <title>Genome sequence of an industrial microorganism Streptomyces avermitilis: deducing the ability of producing secondary metabolites.</title>
        <authorList>
            <person name="Omura S."/>
            <person name="Ikeda H."/>
            <person name="Ishikawa J."/>
            <person name="Hanamoto A."/>
            <person name="Takahashi C."/>
            <person name="Shinose M."/>
            <person name="Takahashi Y."/>
            <person name="Horikawa H."/>
            <person name="Nakazawa H."/>
            <person name="Osonoe T."/>
            <person name="Kikuchi H."/>
            <person name="Shiba T."/>
            <person name="Sakaki Y."/>
            <person name="Hattori M."/>
        </authorList>
    </citation>
    <scope>NUCLEOTIDE SEQUENCE [LARGE SCALE GENOMIC DNA]</scope>
    <source>
        <strain>ATCC 31267 / DSM 46492 / JCM 5070 / NBRC 14893 / NCIMB 12804 / NRRL 8165 / MA-4680</strain>
    </source>
</reference>
<reference key="2">
    <citation type="journal article" date="2003" name="Nat. Biotechnol.">
        <title>Complete genome sequence and comparative analysis of the industrial microorganism Streptomyces avermitilis.</title>
        <authorList>
            <person name="Ikeda H."/>
            <person name="Ishikawa J."/>
            <person name="Hanamoto A."/>
            <person name="Shinose M."/>
            <person name="Kikuchi H."/>
            <person name="Shiba T."/>
            <person name="Sakaki Y."/>
            <person name="Hattori M."/>
            <person name="Omura S."/>
        </authorList>
    </citation>
    <scope>NUCLEOTIDE SEQUENCE [LARGE SCALE GENOMIC DNA]</scope>
    <source>
        <strain>ATCC 31267 / DSM 46492 / JCM 5070 / NBRC 14893 / NCIMB 12804 / NRRL 8165 / MA-4680</strain>
    </source>
</reference>
<proteinExistence type="inferred from homology"/>
<accession>Q82C66</accession>
<evidence type="ECO:0000255" key="1">
    <source>
        <dbReference type="HAMAP-Rule" id="MF_00049"/>
    </source>
</evidence>
<evidence type="ECO:0000256" key="2">
    <source>
        <dbReference type="SAM" id="MobiDB-lite"/>
    </source>
</evidence>
<feature type="chain" id="PRO_0000152092" description="Leucine--tRNA ligase">
    <location>
        <begin position="1"/>
        <end position="962"/>
    </location>
</feature>
<feature type="region of interest" description="Disordered" evidence="2">
    <location>
        <begin position="559"/>
        <end position="582"/>
    </location>
</feature>
<feature type="short sequence motif" description="'HIGH' region">
    <location>
        <begin position="68"/>
        <end position="79"/>
    </location>
</feature>
<feature type="short sequence motif" description="'KMSKS' region">
    <location>
        <begin position="733"/>
        <end position="737"/>
    </location>
</feature>
<feature type="compositionally biased region" description="Polar residues" evidence="2">
    <location>
        <begin position="570"/>
        <end position="579"/>
    </location>
</feature>
<feature type="binding site" evidence="1">
    <location>
        <position position="736"/>
    </location>
    <ligand>
        <name>ATP</name>
        <dbReference type="ChEBI" id="CHEBI:30616"/>
    </ligand>
</feature>
<gene>
    <name evidence="1" type="primary">leuS</name>
    <name type="ordered locus">SAV_5488</name>
</gene>
<protein>
    <recommendedName>
        <fullName evidence="1">Leucine--tRNA ligase</fullName>
        <ecNumber evidence="1">6.1.1.4</ecNumber>
    </recommendedName>
    <alternativeName>
        <fullName evidence="1">Leucyl-tRNA synthetase</fullName>
        <shortName evidence="1">LeuRS</shortName>
    </alternativeName>
</protein>
<keyword id="KW-0030">Aminoacyl-tRNA synthetase</keyword>
<keyword id="KW-0067">ATP-binding</keyword>
<keyword id="KW-0963">Cytoplasm</keyword>
<keyword id="KW-0436">Ligase</keyword>
<keyword id="KW-0547">Nucleotide-binding</keyword>
<keyword id="KW-0648">Protein biosynthesis</keyword>
<keyword id="KW-1185">Reference proteome</keyword>
<sequence length="962" mass="106570">MSETNPAAASEVAAPHRYTAAVAAEIEARWQDFWDAEGTYEAPNPTGDLAGGPALVAKPKKFVMDMFPYPSGAGLHVGHPLGYIATDVFARFQRMTGHNVLHTLGFDAFGLPAEQYAVQTGTHPRVSTEANIENMKVQLRRLGLGHDKRRSFATIDPDYYKWTQWIFLQIFNSWYDEEANKARPIAELVAQFESGERAVPRADGATRAWRELTAAERADVLGEYRLAYASEAPVNWSPGLGTVLANEEVTADGRSERGNFPVFKAKLRQWNMRITAYADRLLDDLDALDWPEAIKLQQRNWIGRSEGARVDFPIDGEAVTVFTTRPDTLFGATYMVLAPEHPLVEKFTPAAWPEGTHDVWTGGHATPAEAVAAYRAQAASKSDVERQAEAKDKTGVFTGAYATNPVSGEQVPVFIADYVLMGYGTGAIMAVPAHDTRDFAFARAFELSMRCVVEPSDDRGTDPSTWDDAFASYDAKIVNSSSGEISLDGLGVVEAKARITEWLERKGLGEGTVNFRLRDWLFSRQRYWGEPFPIVYDEDGIAHALPESMLPLELPEVEDYSPRTFDPDDANTSPETPLSRNEDWVNVTLDLGDGRGPQKYRRETNTMPNWAGSCWYELRYLDPHNDQKLVDPAIEQYWMGPREGQPTGGVDLYVGGAEHAVLHLLYARFWSKVLFDLGHISSAEPFHKLFNQGMIQAYVYRDSRGIAVPAAEVEERDGAYYYQGEKVSRLLGKMGKSLKNAVTPDEICAEYGADTLRLYEMAMGPLDVSRPWDTRAVVGQFRLLQRLWRNVVDEATGEVTVVDAEPDEETLRALHKAIDGVRQDLEGMRFNTAIAKVTELNNQLTKAGGPVPRTVAESLVLLVAPLAPHIAEELWRKLGHNDSVVHQDFPVADPAYVVDEAVTCVVQIKGKVKARLEVSPAISEEELEKVALADEKVVAALGGAGIRKVIVRAPKLVNIVTA</sequence>
<organism>
    <name type="scientific">Streptomyces avermitilis (strain ATCC 31267 / DSM 46492 / JCM 5070 / NBRC 14893 / NCIMB 12804 / NRRL 8165 / MA-4680)</name>
    <dbReference type="NCBI Taxonomy" id="227882"/>
    <lineage>
        <taxon>Bacteria</taxon>
        <taxon>Bacillati</taxon>
        <taxon>Actinomycetota</taxon>
        <taxon>Actinomycetes</taxon>
        <taxon>Kitasatosporales</taxon>
        <taxon>Streptomycetaceae</taxon>
        <taxon>Streptomyces</taxon>
    </lineage>
</organism>
<name>SYL_STRAW</name>
<comment type="catalytic activity">
    <reaction evidence="1">
        <text>tRNA(Leu) + L-leucine + ATP = L-leucyl-tRNA(Leu) + AMP + diphosphate</text>
        <dbReference type="Rhea" id="RHEA:11688"/>
        <dbReference type="Rhea" id="RHEA-COMP:9613"/>
        <dbReference type="Rhea" id="RHEA-COMP:9622"/>
        <dbReference type="ChEBI" id="CHEBI:30616"/>
        <dbReference type="ChEBI" id="CHEBI:33019"/>
        <dbReference type="ChEBI" id="CHEBI:57427"/>
        <dbReference type="ChEBI" id="CHEBI:78442"/>
        <dbReference type="ChEBI" id="CHEBI:78494"/>
        <dbReference type="ChEBI" id="CHEBI:456215"/>
        <dbReference type="EC" id="6.1.1.4"/>
    </reaction>
</comment>
<comment type="subcellular location">
    <subcellularLocation>
        <location evidence="1">Cytoplasm</location>
    </subcellularLocation>
</comment>
<comment type="similarity">
    <text evidence="1">Belongs to the class-I aminoacyl-tRNA synthetase family.</text>
</comment>